<organism>
    <name type="scientific">Serratia proteamaculans (strain 568)</name>
    <dbReference type="NCBI Taxonomy" id="399741"/>
    <lineage>
        <taxon>Bacteria</taxon>
        <taxon>Pseudomonadati</taxon>
        <taxon>Pseudomonadota</taxon>
        <taxon>Gammaproteobacteria</taxon>
        <taxon>Enterobacterales</taxon>
        <taxon>Yersiniaceae</taxon>
        <taxon>Serratia</taxon>
    </lineage>
</organism>
<protein>
    <recommendedName>
        <fullName evidence="1">Nucleoid-associated protein Spro_3255</fullName>
    </recommendedName>
</protein>
<evidence type="ECO:0000255" key="1">
    <source>
        <dbReference type="HAMAP-Rule" id="MF_00730"/>
    </source>
</evidence>
<keyword id="KW-0963">Cytoplasm</keyword>
<comment type="subcellular location">
    <subcellularLocation>
        <location evidence="1">Cytoplasm</location>
        <location evidence="1">Nucleoid</location>
    </subcellularLocation>
</comment>
<comment type="similarity">
    <text evidence="1">Belongs to the YejK family.</text>
</comment>
<gene>
    <name type="ordered locus">Spro_3255</name>
</gene>
<proteinExistence type="inferred from homology"/>
<sequence>MSLDIDQIALHQLVKRDEQTLDVVLRDSLLPTNAAVEEMMEELHRVYSAKSKAYGLFNEGSELADALRTCRKEDKDFLAFSRAATGRLRDELAKYPFAEGGVVLFGQYRYLAVEYLLIAVLNSRNSSRVNEELDINTTHYLDINHADIVARIDLTEWETNPESTRYLTFLKGRVGRKVSDFFMDFLAAAEGLDTKAQNRGLLQAVDDYCADAQLDKNERQSVRQQVYSYCNEQLQAGEEIELQELSKEIAPVGEKDFLQFSSEQGYQLEDSFPADRGTLRQLTKFAGSGGGISMNFDAMLLGERIFWDAATDTLTIRGTPPNLRDQLQRRQNSGNK</sequence>
<feature type="chain" id="PRO_1000062110" description="Nucleoid-associated protein Spro_3255">
    <location>
        <begin position="1"/>
        <end position="336"/>
    </location>
</feature>
<dbReference type="EMBL" id="CP000826">
    <property type="protein sequence ID" value="ABV42353.1"/>
    <property type="molecule type" value="Genomic_DNA"/>
</dbReference>
<dbReference type="SMR" id="A8GGW3"/>
<dbReference type="STRING" id="399741.Spro_3255"/>
<dbReference type="KEGG" id="spe:Spro_3255"/>
<dbReference type="eggNOG" id="COG3081">
    <property type="taxonomic scope" value="Bacteria"/>
</dbReference>
<dbReference type="HOGENOM" id="CLU_063050_0_1_6"/>
<dbReference type="OrthoDB" id="9131762at2"/>
<dbReference type="GO" id="GO:0043590">
    <property type="term" value="C:bacterial nucleoid"/>
    <property type="evidence" value="ECO:0007669"/>
    <property type="project" value="TreeGrafter"/>
</dbReference>
<dbReference type="GO" id="GO:0005737">
    <property type="term" value="C:cytoplasm"/>
    <property type="evidence" value="ECO:0007669"/>
    <property type="project" value="UniProtKB-UniRule"/>
</dbReference>
<dbReference type="GO" id="GO:0003690">
    <property type="term" value="F:double-stranded DNA binding"/>
    <property type="evidence" value="ECO:0007669"/>
    <property type="project" value="TreeGrafter"/>
</dbReference>
<dbReference type="GO" id="GO:0003727">
    <property type="term" value="F:single-stranded RNA binding"/>
    <property type="evidence" value="ECO:0007669"/>
    <property type="project" value="TreeGrafter"/>
</dbReference>
<dbReference type="HAMAP" id="MF_00730">
    <property type="entry name" value="NdpA"/>
    <property type="match status" value="1"/>
</dbReference>
<dbReference type="InterPro" id="IPR007358">
    <property type="entry name" value="Nucleoid_associated_NdpA"/>
</dbReference>
<dbReference type="NCBIfam" id="NF001557">
    <property type="entry name" value="PRK00378.1"/>
    <property type="match status" value="1"/>
</dbReference>
<dbReference type="PANTHER" id="PTHR38772">
    <property type="match status" value="1"/>
</dbReference>
<dbReference type="PANTHER" id="PTHR38772:SF1">
    <property type="entry name" value="NUCLEOID-ASSOCIATED PROTEIN YEJK"/>
    <property type="match status" value="1"/>
</dbReference>
<dbReference type="Pfam" id="PF04245">
    <property type="entry name" value="NA37"/>
    <property type="match status" value="1"/>
</dbReference>
<accession>A8GGW3</accession>
<reference key="1">
    <citation type="submission" date="2007-09" db="EMBL/GenBank/DDBJ databases">
        <title>Complete sequence of chromosome of Serratia proteamaculans 568.</title>
        <authorList>
            <consortium name="US DOE Joint Genome Institute"/>
            <person name="Copeland A."/>
            <person name="Lucas S."/>
            <person name="Lapidus A."/>
            <person name="Barry K."/>
            <person name="Glavina del Rio T."/>
            <person name="Dalin E."/>
            <person name="Tice H."/>
            <person name="Pitluck S."/>
            <person name="Chain P."/>
            <person name="Malfatti S."/>
            <person name="Shin M."/>
            <person name="Vergez L."/>
            <person name="Schmutz J."/>
            <person name="Larimer F."/>
            <person name="Land M."/>
            <person name="Hauser L."/>
            <person name="Kyrpides N."/>
            <person name="Kim E."/>
            <person name="Taghavi S."/>
            <person name="Newman L."/>
            <person name="Vangronsveld J."/>
            <person name="van der Lelie D."/>
            <person name="Richardson P."/>
        </authorList>
    </citation>
    <scope>NUCLEOTIDE SEQUENCE [LARGE SCALE GENOMIC DNA]</scope>
    <source>
        <strain>568</strain>
    </source>
</reference>
<name>NDPA_SERP5</name>